<evidence type="ECO:0000250" key="1">
    <source>
        <dbReference type="UniProtKB" id="P0DJ31"/>
    </source>
</evidence>
<evidence type="ECO:0000255" key="2"/>
<evidence type="ECO:0000269" key="3">
    <source>
    </source>
</evidence>
<evidence type="ECO:0000269" key="4">
    <source>
    </source>
</evidence>
<evidence type="ECO:0000305" key="5"/>
<evidence type="ECO:0000305" key="6">
    <source>
    </source>
</evidence>
<proteinExistence type="evidence at protein level"/>
<name>KAXU2_HOFGE</name>
<protein>
    <recommendedName>
        <fullName evidence="5">Potassium channel toxin alpha-KTx</fullName>
    </recommendedName>
</protein>
<feature type="signal peptide" evidence="2">
    <location>
        <begin position="1"/>
        <end position="25"/>
    </location>
</feature>
<feature type="propeptide" id="PRO_0000366118" evidence="5">
    <location>
        <begin position="26"/>
        <end position="31"/>
    </location>
</feature>
<feature type="peptide" id="PRO_0000366119" description="Potassium channel toxin alpha-KTx" evidence="6">
    <location>
        <begin position="32"/>
        <end position="67"/>
    </location>
</feature>
<feature type="disulfide bond" evidence="1">
    <location>
        <begin position="35"/>
        <end position="54"/>
    </location>
</feature>
<feature type="disulfide bond" evidence="1">
    <location>
        <begin position="40"/>
        <end position="59"/>
    </location>
</feature>
<feature type="disulfide bond" evidence="1">
    <location>
        <begin position="44"/>
        <end position="61"/>
    </location>
</feature>
<feature type="disulfide bond" evidence="1">
    <location>
        <begin position="49"/>
        <end position="64"/>
    </location>
</feature>
<comment type="function">
    <text evidence="4">Blocks Kv1.1/KCNA1, Kv1.2/KCNA2 and Kv1.3/KCNA3 voltage-gated potassium channels.</text>
</comment>
<comment type="subcellular location">
    <subcellularLocation>
        <location evidence="3">Secreted</location>
    </subcellularLocation>
</comment>
<comment type="tissue specificity">
    <text evidence="6">Expressed by the venom gland.</text>
</comment>
<comment type="similarity">
    <text evidence="5">Belongs to the short scorpion toxin superfamily. Potassium channel inhibitor family.</text>
</comment>
<sequence length="67" mass="7585">MKNIAMKTTVVLTILLLSVLTAINADTMKKRSDYCSNDFCFFSCRRDRCARGDCENGKCVCKNCHLN</sequence>
<keyword id="KW-0165">Cleavage on pair of basic residues</keyword>
<keyword id="KW-0903">Direct protein sequencing</keyword>
<keyword id="KW-1015">Disulfide bond</keyword>
<keyword id="KW-0872">Ion channel impairing toxin</keyword>
<keyword id="KW-0528">Neurotoxin</keyword>
<keyword id="KW-0632">Potassium channel impairing toxin</keyword>
<keyword id="KW-0964">Secreted</keyword>
<keyword id="KW-0732">Signal</keyword>
<keyword id="KW-0800">Toxin</keyword>
<reference key="1">
    <citation type="journal article" date="2007" name="BMC Genomics">
        <title>Transcriptome analysis of the venom gland of the Mexican scorpion Hadrurus gertschi (Arachnida: Scorpiones).</title>
        <authorList>
            <person name="Schwartz E.F."/>
            <person name="Diego-Garcia E."/>
            <person name="Rodriguez de la Vega R.C."/>
            <person name="Possani L.D."/>
        </authorList>
    </citation>
    <scope>NUCLEOTIDE SEQUENCE [LARGE SCALE MRNA]</scope>
    <scope>PARTIAL PROTEIN SEQUENCE</scope>
    <scope>SUBCELLULAR LOCATION</scope>
    <source>
        <tissue>Venom</tissue>
        <tissue>Venom gland</tissue>
    </source>
</reference>
<reference key="2">
    <citation type="journal article" date="2018" name="Nat. Struct. Mol. Biol.">
        <title>Screening, large-scale production and structure-based classification of cystine-dense peptides.</title>
        <authorList>
            <person name="Correnti C.E."/>
            <person name="Gewe M.M."/>
            <person name="Mehlin C."/>
            <person name="Bandaranayake A.D."/>
            <person name="Johnsen W.A."/>
            <person name="Rupert P.B."/>
            <person name="Brusniak M.Y."/>
            <person name="Clarke M."/>
            <person name="Burke S.E."/>
            <person name="De Van Der Schueren W."/>
            <person name="Pilat K."/>
            <person name="Turnbaugh S.M."/>
            <person name="May D."/>
            <person name="Watson A."/>
            <person name="Chan M.K."/>
            <person name="Bahl C.D."/>
            <person name="Olson J.M."/>
            <person name="Strong R.K."/>
        </authorList>
    </citation>
    <scope>FUNCTION</scope>
    <scope>SYNTHESIS OF 32-67</scope>
</reference>
<dbReference type="EMBL" id="EL698899">
    <property type="status" value="NOT_ANNOTATED_CDS"/>
    <property type="molecule type" value="mRNA"/>
</dbReference>
<dbReference type="GO" id="GO:0005576">
    <property type="term" value="C:extracellular region"/>
    <property type="evidence" value="ECO:0007669"/>
    <property type="project" value="UniProtKB-SubCell"/>
</dbReference>
<dbReference type="GO" id="GO:0015459">
    <property type="term" value="F:potassium channel regulator activity"/>
    <property type="evidence" value="ECO:0007669"/>
    <property type="project" value="UniProtKB-KW"/>
</dbReference>
<dbReference type="GO" id="GO:0090729">
    <property type="term" value="F:toxin activity"/>
    <property type="evidence" value="ECO:0007669"/>
    <property type="project" value="UniProtKB-KW"/>
</dbReference>
<accession>P0C8X9</accession>
<organism>
    <name type="scientific">Hoffmannihadrurus gertschi</name>
    <name type="common">Scorpion</name>
    <name type="synonym">Hadrurus gertschi</name>
    <dbReference type="NCBI Taxonomy" id="380989"/>
    <lineage>
        <taxon>Eukaryota</taxon>
        <taxon>Metazoa</taxon>
        <taxon>Ecdysozoa</taxon>
        <taxon>Arthropoda</taxon>
        <taxon>Chelicerata</taxon>
        <taxon>Arachnida</taxon>
        <taxon>Scorpiones</taxon>
        <taxon>Iurida</taxon>
        <taxon>Iuroidea</taxon>
        <taxon>Hadrurus</taxon>
    </lineage>
</organism>